<accession>A8A935</accession>
<protein>
    <recommendedName>
        <fullName evidence="1">Protein pelota homolog</fullName>
        <ecNumber evidence="1">3.1.-.-</ecNumber>
    </recommendedName>
</protein>
<comment type="function">
    <text evidence="1">May function in recognizing stalled ribosomes, interact with stem-loop structures in stalled mRNA molecules, and effect endonucleolytic cleavage of the mRNA. May play a role in the release non-functional ribosomes and degradation of damaged mRNAs. Has endoribonuclease activity.</text>
</comment>
<comment type="cofactor">
    <cofactor evidence="1">
        <name>a divalent metal cation</name>
        <dbReference type="ChEBI" id="CHEBI:60240"/>
    </cofactor>
</comment>
<comment type="subunit">
    <text evidence="1">Monomer.</text>
</comment>
<comment type="subcellular location">
    <subcellularLocation>
        <location evidence="1">Cytoplasm</location>
    </subcellularLocation>
</comment>
<comment type="domain">
    <text evidence="1">The N-terminal domain has the RNA-binding Sm fold. It harbors the endoribonuclease activity.</text>
</comment>
<comment type="similarity">
    <text evidence="1">Belongs to the eukaryotic release factor 1 family. Pelota subfamily.</text>
</comment>
<gene>
    <name evidence="1" type="primary">pelA</name>
    <name type="ordered locus">Igni_0253</name>
</gene>
<feature type="chain" id="PRO_0000361788" description="Protein pelota homolog">
    <location>
        <begin position="1"/>
        <end position="346"/>
    </location>
</feature>
<sequence>MRVLEVNESKGEVKVRVEDEEDVWILHSALRPGDLVRARTARSVAGSSGKEKIPMTLTIKVTGSEFQAFSNVLRVKGVVVEGPDKFGLIGSHHAIKVYPGKEITIIRERGLAQLLERLKKGEERKPQVPVLAVDYDEYSLAVVRGQGIEWVFEGSLRLPGKGDEGREAATERKINELAKRVSEELKLRNLDHVVVVGPGFLKDKVAQRLSEEGFKVKVDSASSGGRAGVLEAIRKGSLRGVAKELESIKALEALEEFVKHVARGDGYALYGVDDCMTAAQANAVKTLIISDDLLHSPDLGERAVELVELAEKKGAEVIIVPKGTEAWERLRPFGDVVCLLRFPISL</sequence>
<reference key="1">
    <citation type="journal article" date="2008" name="Genome Biol.">
        <title>A genomic analysis of the archaeal system Ignicoccus hospitalis-Nanoarchaeum equitans.</title>
        <authorList>
            <person name="Podar M."/>
            <person name="Anderson I."/>
            <person name="Makarova K.S."/>
            <person name="Elkins J.G."/>
            <person name="Ivanova N."/>
            <person name="Wall M.A."/>
            <person name="Lykidis A."/>
            <person name="Mavromatis K."/>
            <person name="Sun H."/>
            <person name="Hudson M.E."/>
            <person name="Chen W."/>
            <person name="Deciu C."/>
            <person name="Hutchison D."/>
            <person name="Eads J.R."/>
            <person name="Anderson A."/>
            <person name="Fernandes F."/>
            <person name="Szeto E."/>
            <person name="Lapidus A."/>
            <person name="Kyrpides N.C."/>
            <person name="Saier M.H. Jr."/>
            <person name="Richardson P.M."/>
            <person name="Rachel R."/>
            <person name="Huber H."/>
            <person name="Eisen J.A."/>
            <person name="Koonin E.V."/>
            <person name="Keller M."/>
            <person name="Stetter K.O."/>
        </authorList>
    </citation>
    <scope>NUCLEOTIDE SEQUENCE [LARGE SCALE GENOMIC DNA]</scope>
    <source>
        <strain>KIN4/I / DSM 18386 / JCM 14125</strain>
    </source>
</reference>
<dbReference type="EC" id="3.1.-.-" evidence="1"/>
<dbReference type="EMBL" id="CP000816">
    <property type="protein sequence ID" value="ABU81437.1"/>
    <property type="molecule type" value="Genomic_DNA"/>
</dbReference>
<dbReference type="RefSeq" id="WP_011998289.1">
    <property type="nucleotide sequence ID" value="NC_009776.1"/>
</dbReference>
<dbReference type="SMR" id="A8A935"/>
<dbReference type="STRING" id="453591.Igni_0253"/>
<dbReference type="GeneID" id="5561839"/>
<dbReference type="KEGG" id="iho:Igni_0253"/>
<dbReference type="eggNOG" id="arCOG01741">
    <property type="taxonomic scope" value="Archaea"/>
</dbReference>
<dbReference type="HOGENOM" id="CLU_023334_0_0_2"/>
<dbReference type="OrthoDB" id="31300at2157"/>
<dbReference type="PhylomeDB" id="A8A935"/>
<dbReference type="Proteomes" id="UP000000262">
    <property type="component" value="Chromosome"/>
</dbReference>
<dbReference type="GO" id="GO:0005737">
    <property type="term" value="C:cytoplasm"/>
    <property type="evidence" value="ECO:0007669"/>
    <property type="project" value="UniProtKB-SubCell"/>
</dbReference>
<dbReference type="GO" id="GO:0004519">
    <property type="term" value="F:endonuclease activity"/>
    <property type="evidence" value="ECO:0007669"/>
    <property type="project" value="UniProtKB-UniRule"/>
</dbReference>
<dbReference type="GO" id="GO:0046872">
    <property type="term" value="F:metal ion binding"/>
    <property type="evidence" value="ECO:0007669"/>
    <property type="project" value="UniProtKB-UniRule"/>
</dbReference>
<dbReference type="GO" id="GO:0070651">
    <property type="term" value="P:nonfunctional rRNA decay"/>
    <property type="evidence" value="ECO:0007669"/>
    <property type="project" value="TreeGrafter"/>
</dbReference>
<dbReference type="GO" id="GO:0070966">
    <property type="term" value="P:nuclear-transcribed mRNA catabolic process, no-go decay"/>
    <property type="evidence" value="ECO:0007669"/>
    <property type="project" value="InterPro"/>
</dbReference>
<dbReference type="GO" id="GO:0070481">
    <property type="term" value="P:nuclear-transcribed mRNA catabolic process, non-stop decay"/>
    <property type="evidence" value="ECO:0007669"/>
    <property type="project" value="InterPro"/>
</dbReference>
<dbReference type="GO" id="GO:0032790">
    <property type="term" value="P:ribosome disassembly"/>
    <property type="evidence" value="ECO:0007669"/>
    <property type="project" value="TreeGrafter"/>
</dbReference>
<dbReference type="GO" id="GO:0071025">
    <property type="term" value="P:RNA surveillance"/>
    <property type="evidence" value="ECO:0007669"/>
    <property type="project" value="InterPro"/>
</dbReference>
<dbReference type="Gene3D" id="3.30.1330.30">
    <property type="match status" value="1"/>
</dbReference>
<dbReference type="Gene3D" id="3.30.420.60">
    <property type="entry name" value="eRF1 domain 2"/>
    <property type="match status" value="1"/>
</dbReference>
<dbReference type="Gene3D" id="2.30.30.870">
    <property type="entry name" value="Pelota, domain A"/>
    <property type="match status" value="1"/>
</dbReference>
<dbReference type="HAMAP" id="MF_01853">
    <property type="entry name" value="PelO"/>
    <property type="match status" value="1"/>
</dbReference>
<dbReference type="InterPro" id="IPR042226">
    <property type="entry name" value="eFR1_2_sf"/>
</dbReference>
<dbReference type="InterPro" id="IPR005140">
    <property type="entry name" value="eRF1_1_Pelota"/>
</dbReference>
<dbReference type="InterPro" id="IPR005142">
    <property type="entry name" value="eRF1_3"/>
</dbReference>
<dbReference type="InterPro" id="IPR038069">
    <property type="entry name" value="Pelota/DOM34_N"/>
</dbReference>
<dbReference type="InterPro" id="IPR023521">
    <property type="entry name" value="Pelota_arc"/>
</dbReference>
<dbReference type="InterPro" id="IPR029064">
    <property type="entry name" value="Ribosomal_eL30-like_sf"/>
</dbReference>
<dbReference type="InterPro" id="IPR004405">
    <property type="entry name" value="Transl-rel_pelota"/>
</dbReference>
<dbReference type="PANTHER" id="PTHR10853">
    <property type="entry name" value="PELOTA"/>
    <property type="match status" value="1"/>
</dbReference>
<dbReference type="PANTHER" id="PTHR10853:SF0">
    <property type="entry name" value="PROTEIN PELOTA HOMOLOG"/>
    <property type="match status" value="1"/>
</dbReference>
<dbReference type="Pfam" id="PF03463">
    <property type="entry name" value="eRF1_1"/>
    <property type="match status" value="1"/>
</dbReference>
<dbReference type="Pfam" id="PF03465">
    <property type="entry name" value="eRF1_3"/>
    <property type="match status" value="1"/>
</dbReference>
<dbReference type="SMART" id="SM01194">
    <property type="entry name" value="eRF1_1"/>
    <property type="match status" value="1"/>
</dbReference>
<dbReference type="SUPFAM" id="SSF159065">
    <property type="entry name" value="Dom34/Pelota N-terminal domain-like"/>
    <property type="match status" value="1"/>
</dbReference>
<dbReference type="SUPFAM" id="SSF55315">
    <property type="entry name" value="L30e-like"/>
    <property type="match status" value="1"/>
</dbReference>
<dbReference type="SUPFAM" id="SSF53137">
    <property type="entry name" value="Translational machinery components"/>
    <property type="match status" value="1"/>
</dbReference>
<organism>
    <name type="scientific">Ignicoccus hospitalis (strain KIN4/I / DSM 18386 / JCM 14125)</name>
    <dbReference type="NCBI Taxonomy" id="453591"/>
    <lineage>
        <taxon>Archaea</taxon>
        <taxon>Thermoproteota</taxon>
        <taxon>Thermoprotei</taxon>
        <taxon>Desulfurococcales</taxon>
        <taxon>Desulfurococcaceae</taxon>
        <taxon>Ignicoccus</taxon>
    </lineage>
</organism>
<name>PELO_IGNH4</name>
<keyword id="KW-0963">Cytoplasm</keyword>
<keyword id="KW-0255">Endonuclease</keyword>
<keyword id="KW-0378">Hydrolase</keyword>
<keyword id="KW-0479">Metal-binding</keyword>
<keyword id="KW-0540">Nuclease</keyword>
<keyword id="KW-1185">Reference proteome</keyword>
<proteinExistence type="inferred from homology"/>
<evidence type="ECO:0000255" key="1">
    <source>
        <dbReference type="HAMAP-Rule" id="MF_01853"/>
    </source>
</evidence>